<feature type="initiator methionine" description="Removed; by host" evidence="3">
    <location>
        <position position="1"/>
    </location>
</feature>
<feature type="chain" id="PRO_0000403622" description="Gag-Pro polyprotein">
    <location>
        <begin position="2"/>
        <end position="860"/>
    </location>
</feature>
<feature type="chain" id="PRO_0000403623" description="Matrix protein p10">
    <location>
        <begin position="2"/>
        <end position="99"/>
    </location>
</feature>
<feature type="chain" id="PRO_0000403624" description="Phosphorylated protein pp21">
    <location>
        <begin position="100"/>
        <end position="195"/>
    </location>
</feature>
<feature type="chain" id="PRO_0000403625" description="Protein p3">
    <location>
        <begin position="196"/>
        <end position="228"/>
    </location>
</feature>
<feature type="chain" id="PRO_0000403626" description="Protein p8">
    <location>
        <begin position="229"/>
        <end position="254"/>
    </location>
</feature>
<feature type="chain" id="PRO_0000403627" description="Protein n">
    <location>
        <begin position="255"/>
        <end position="269"/>
    </location>
</feature>
<feature type="chain" id="PRO_0000403628" description="Capsid protein p27">
    <location>
        <begin position="270"/>
        <end position="496"/>
    </location>
</feature>
<feature type="chain" id="PRO_0000403629" description="Nucleocapsid protein-dUTPase">
    <location>
        <begin position="497"/>
        <end position="745"/>
    </location>
</feature>
<feature type="chain" id="PRO_0000403630" description="Protease">
    <location>
        <begin position="746"/>
        <end position="860"/>
    </location>
</feature>
<feature type="domain" description="Peptidase A2" evidence="5">
    <location>
        <begin position="766"/>
        <end position="841"/>
    </location>
</feature>
<feature type="zinc finger region" description="CCHC-type 1" evidence="4">
    <location>
        <begin position="525"/>
        <end position="542"/>
    </location>
</feature>
<feature type="zinc finger region" description="CCHC-type 2" evidence="4">
    <location>
        <begin position="552"/>
        <end position="569"/>
    </location>
</feature>
<feature type="region of interest" description="Disordered" evidence="6">
    <location>
        <begin position="154"/>
        <end position="193"/>
    </location>
</feature>
<feature type="region of interest" description="Disordered" evidence="6">
    <location>
        <begin position="572"/>
        <end position="631"/>
    </location>
</feature>
<feature type="short sequence motif" description="PTAP/PSAP motif" evidence="10">
    <location>
        <begin position="305"/>
        <end position="308"/>
    </location>
</feature>
<feature type="compositionally biased region" description="Basic and acidic residues" evidence="6">
    <location>
        <begin position="154"/>
        <end position="169"/>
    </location>
</feature>
<feature type="compositionally biased region" description="Basic and acidic residues" evidence="6">
    <location>
        <begin position="178"/>
        <end position="193"/>
    </location>
</feature>
<feature type="compositionally biased region" description="Polar residues" evidence="6">
    <location>
        <begin position="584"/>
        <end position="601"/>
    </location>
</feature>
<feature type="active site" description="Protease; shared with dimeric partner" evidence="5">
    <location>
        <position position="771"/>
    </location>
</feature>
<feature type="site" description="Cleavage; by viral protease" evidence="7">
    <location>
        <begin position="99"/>
        <end position="100"/>
    </location>
</feature>
<feature type="site" description="Cleavage; by viral protease" evidence="7">
    <location>
        <begin position="195"/>
        <end position="196"/>
    </location>
</feature>
<feature type="site" description="Cleavage; by viral protease" evidence="7">
    <location>
        <begin position="228"/>
        <end position="229"/>
    </location>
</feature>
<feature type="site" description="Cleavage; by viral protease" evidence="7">
    <location>
        <begin position="254"/>
        <end position="255"/>
    </location>
</feature>
<feature type="site" description="Cleavage; by viral protease" evidence="7">
    <location>
        <begin position="269"/>
        <end position="270"/>
    </location>
</feature>
<feature type="site" description="Cleavage; by viral protease" evidence="7 9">
    <location>
        <begin position="496"/>
        <end position="497"/>
    </location>
</feature>
<feature type="site" description="Cleavage; by viral protease" evidence="9">
    <location>
        <begin position="745"/>
        <end position="746"/>
    </location>
</feature>
<feature type="lipid moiety-binding region" description="N-myristoyl glycine; by host" evidence="7">
    <location>
        <position position="2"/>
    </location>
</feature>
<feature type="sequence variant">
    <original>E</original>
    <variation>K</variation>
    <location>
        <position position="523"/>
    </location>
</feature>
<protein>
    <recommendedName>
        <fullName>Gag-Pro polyprotein</fullName>
    </recommendedName>
    <component>
        <recommendedName>
            <fullName>Matrix protein p10</fullName>
        </recommendedName>
    </component>
    <component>
        <recommendedName>
            <fullName>Phosphorylated protein pp21</fullName>
        </recommendedName>
    </component>
    <component>
        <recommendedName>
            <fullName>Protein p3</fullName>
        </recommendedName>
    </component>
    <component>
        <recommendedName>
            <fullName>Protein p8</fullName>
        </recommendedName>
    </component>
    <component>
        <recommendedName>
            <fullName>Protein n</fullName>
        </recommendedName>
    </component>
    <component>
        <recommendedName>
            <fullName>Capsid protein p27</fullName>
        </recommendedName>
    </component>
    <component>
        <recommendedName>
            <fullName>Nucleocapsid protein-dUTPase</fullName>
            <shortName>NC-dUTPase</shortName>
            <ecNumber evidence="9">3.6.1.23</ecNumber>
        </recommendedName>
    </component>
    <component>
        <recommendedName>
            <fullName>Protease</fullName>
            <ecNumber evidence="5">3.4.23.-</ecNumber>
        </recommendedName>
    </component>
</protein>
<organismHost>
    <name type="scientific">Mus musculus</name>
    <name type="common">Mouse</name>
    <dbReference type="NCBI Taxonomy" id="10090"/>
</organismHost>
<gene>
    <name type="primary">gag-pro</name>
</gene>
<proteinExistence type="evidence at protein level"/>
<name>PRO_MMTVC</name>
<sequence>MGVSGSKGQKLFVSVLQRLLSERGLHVKESSAIEFYQFLIKVSPWFPEEGGLNLQDWKRVGREMKKYAAEHGTDSIPKQAYPIWLQLREILTEQSDLVLLSAEAKSVTEEELEEGLTGLLSASSQEKTYGTRGTAYAEIDTEVDKLSEHIYDEPYEEKEKADKNEEKDHVRKVKKIVQRKENSEHKRKEKDQKAFLATDWNNDDLSPEDWDDLEEQAAHYHDDDELILPVKRKVDKKKPLALRRKPLPPVGFAGAMAEAREKGDLTFTFPVVFMGESDDDDTPVWEPLPLKTLKELQSAVRTMGPSAPYTLQVVDMVASQWLTPSDWHQTARATLSPGDYVLWRTEYEEKSKETVQKTAGKRKGKVSLDMLLGTGQFLSPSSQIKLSKDVLKDVTTNAVLAWRAIPPPGVKKTVLAGLKQGNEESYETFISRLEEAVYRMMPRGEGSDILIKQLAWENANSLCQDLIRPMRKTGTMQDYIRACLDASPAVVQGMAYAAAMRGQKYSTFVKQTYGGGKGGQGSEGPVCFSCGKTGHIKRDCKEEKGSKRAPPGLCPRCKKGYHWKSECKSKFDKDGNPLPPLETNAENSKNLVKGQSPSPTQKGDKGKDSGLNPEAPPFTIHDLPRGTPGSAGLDLSSQKDLILSLEDGVSLVPTLVKGTLPEGTTGLIIGRSSNYKKGLEVLPGVIDSDFQGEIKVMVKAAKNAVIIHKGERIAQLLLLPYLKLPNPIIKEERGSEGFGSTSHVHWVQEISDSRPMLHISLNGRRFLGLLDTGADKTCIAGRDWPANWPIHQTESSLQGLGMACGVARSSQPLRWQHEDKSGIIHPFVIPTLPFTLWGRDIMKEIKVRLMTDSPDDSQDL</sequence>
<organism>
    <name type="scientific">Mouse mammary tumor virus (strain C3H)</name>
    <name type="common">MMTV</name>
    <dbReference type="NCBI Taxonomy" id="11759"/>
    <lineage>
        <taxon>Viruses</taxon>
        <taxon>Riboviria</taxon>
        <taxon>Pararnavirae</taxon>
        <taxon>Artverviricota</taxon>
        <taxon>Revtraviricetes</taxon>
        <taxon>Ortervirales</taxon>
        <taxon>Retroviridae</taxon>
        <taxon>Orthoretrovirinae</taxon>
        <taxon>Betaretrovirus</taxon>
        <taxon>Mouse mammary tumor virus</taxon>
    </lineage>
</organism>
<accession>Q9IZT2</accession>
<evidence type="ECO:0000250" key="1">
    <source>
        <dbReference type="UniProtKB" id="P10258"/>
    </source>
</evidence>
<evidence type="ECO:0000250" key="2">
    <source>
        <dbReference type="UniProtKB" id="P10271"/>
    </source>
</evidence>
<evidence type="ECO:0000255" key="3"/>
<evidence type="ECO:0000255" key="4">
    <source>
        <dbReference type="PROSITE-ProRule" id="PRU00047"/>
    </source>
</evidence>
<evidence type="ECO:0000255" key="5">
    <source>
        <dbReference type="PROSITE-ProRule" id="PRU00275"/>
    </source>
</evidence>
<evidence type="ECO:0000256" key="6">
    <source>
        <dbReference type="SAM" id="MobiDB-lite"/>
    </source>
</evidence>
<evidence type="ECO:0000269" key="7">
    <source>
    </source>
</evidence>
<evidence type="ECO:0000269" key="8">
    <source>
    </source>
</evidence>
<evidence type="ECO:0000269" key="9">
    <source>
    </source>
</evidence>
<evidence type="ECO:0000305" key="10"/>
<evidence type="ECO:0000305" key="11">
    <source>
    </source>
</evidence>
<comment type="function">
    <molecule>Matrix protein p10</molecule>
    <text evidence="10">Matrix protein.</text>
</comment>
<comment type="function">
    <text evidence="10">Nucleocapsid protein p14: Binds strongly to viral nucleic acids and promote their aggregation. Also destabilizes the nucleic acids duplexes via highly structured zinc-binding motifs.</text>
</comment>
<comment type="function">
    <molecule>Capsid protein p27</molecule>
    <text evidence="10">Capsid protein.</text>
</comment>
<comment type="function">
    <molecule>Nucleocapsid protein-dUTPase</molecule>
    <text evidence="11">NC-dUTPase has dUTPase activity, thereby preventing incorporation of uracil into DNA.</text>
</comment>
<comment type="function">
    <molecule>Protease</molecule>
    <text evidence="5">The aspartyl protease mediates proteolytic cleavages of Gag and Gag-Pol polyproteins during or shortly after the release of the virion from the plasma membrane. Cleavages take place as an ordered, step-wise cascade to yield mature proteins. This process is called maturation. Displays maximal activity during the budding process just prior to particle release from the cell.</text>
</comment>
<comment type="catalytic activity">
    <reaction evidence="9">
        <text>dUTP + H2O = dUMP + diphosphate + H(+)</text>
        <dbReference type="Rhea" id="RHEA:10248"/>
        <dbReference type="ChEBI" id="CHEBI:15377"/>
        <dbReference type="ChEBI" id="CHEBI:15378"/>
        <dbReference type="ChEBI" id="CHEBI:33019"/>
        <dbReference type="ChEBI" id="CHEBI:61555"/>
        <dbReference type="ChEBI" id="CHEBI:246422"/>
        <dbReference type="EC" id="3.6.1.23"/>
    </reaction>
</comment>
<comment type="cofactor">
    <cofactor>
        <name>Mg(2+)</name>
        <dbReference type="ChEBI" id="CHEBI:18420"/>
    </cofactor>
    <text evidence="11">Magnesium ions are required for NC-dUTPase activity.</text>
</comment>
<comment type="activity regulation">
    <molecule>Protease</molecule>
    <text evidence="2">Inhibited by pepstatin A.</text>
</comment>
<comment type="subunit">
    <molecule>Matrix protein p10</molecule>
    <text evidence="10">Homodimer; when myristoylated.</text>
</comment>
<comment type="subunit">
    <molecule>Protease</molecule>
    <text evidence="1">Homodimer (By similarity).</text>
</comment>
<comment type="subunit">
    <molecule>Nucleocapsid protein-dUTPase</molecule>
    <text evidence="9">NC-dUTPase is a homotrimer (PubMed:8091672).</text>
</comment>
<comment type="subcellular location">
    <molecule>Matrix protein p10</molecule>
    <subcellularLocation>
        <location evidence="1">Virion</location>
    </subcellularLocation>
</comment>
<comment type="subcellular location">
    <molecule>Capsid protein p27</molecule>
    <subcellularLocation>
        <location evidence="1">Virion</location>
    </subcellularLocation>
</comment>
<comment type="subcellular location">
    <molecule>Nucleocapsid protein-dUTPase</molecule>
    <subcellularLocation>
        <location evidence="1">Virion</location>
    </subcellularLocation>
</comment>
<comment type="alternative products">
    <event type="ribosomal frameshifting"/>
    <isoform>
        <id>Q9IZT2-1</id>
        <name>Gag-Pro polyprotein</name>
        <sequence type="displayed"/>
    </isoform>
    <isoform>
        <id>P11283-1</id>
        <name>Gag-Pro-Pol polyprotein</name>
        <sequence type="external"/>
    </isoform>
    <isoform>
        <id>P11284-1</id>
        <name>Gag polyprotein</name>
        <sequence type="external"/>
    </isoform>
</comment>
<comment type="domain">
    <molecule>Gag-Pro polyprotein</molecule>
    <text evidence="10">Late-budding domains (L domains) are short sequence motifs essential for viral particle release. They can occur individually or in close proximity within structural proteins. They interacts with sorting cellular proteins of the multivesicular body (MVB) pathway. Most of these proteins are class E vacuolar protein sorting factors belonging to ESCRT-I, ESCRT-II or ESCRT-III complexes. Gag-p27 contains one L domain: a PTAP/PSAP motif, which interacts with the UEV domain of TSG101.</text>
</comment>
<comment type="PTM">
    <molecule>Protease</molecule>
    <text evidence="2">Released by autocatalytic processing.</text>
</comment>
<comment type="PTM">
    <molecule>Gag-Pro polyprotein</molecule>
    <text evidence="7">Myristoylated. Myristoylation of the matrix (MA) domain mediates the transport and binding of Gag polyproteins to the host plasma membrane and is required for the assembly of viral particles.</text>
</comment>
<comment type="PTM">
    <molecule>Gag-Pro polyprotein</molecule>
    <text evidence="7">Specific enzymatic cleavages in vivo yield mature proteins.</text>
</comment>
<comment type="miscellaneous">
    <molecule>Isoform Gag-Pro polyprotein</molecule>
    <text evidence="8 9">Produced by -1 ribosomal frameshifting between gag-pro.</text>
</comment>
<dbReference type="EC" id="3.6.1.23" evidence="9"/>
<dbReference type="EC" id="3.4.23.-" evidence="5"/>
<dbReference type="EMBL" id="AF228552">
    <property type="protein sequence ID" value="AAF31473.1"/>
    <property type="molecule type" value="Genomic_DNA"/>
</dbReference>
<dbReference type="EMBL" id="M16766">
    <property type="protein sequence ID" value="AAA66623.1"/>
    <property type="molecule type" value="Genomic_RNA"/>
</dbReference>
<dbReference type="BMRB" id="Q9IZT2"/>
<dbReference type="SMR" id="Q9IZT2"/>
<dbReference type="MEROPS" id="A02.010"/>
<dbReference type="iPTMnet" id="Q9IZT2"/>
<dbReference type="Proteomes" id="UP000006540">
    <property type="component" value="Genome"/>
</dbReference>
<dbReference type="GO" id="GO:0019013">
    <property type="term" value="C:viral nucleocapsid"/>
    <property type="evidence" value="ECO:0007669"/>
    <property type="project" value="UniProtKB-KW"/>
</dbReference>
<dbReference type="GO" id="GO:0004190">
    <property type="term" value="F:aspartic-type endopeptidase activity"/>
    <property type="evidence" value="ECO:0007669"/>
    <property type="project" value="UniProtKB-KW"/>
</dbReference>
<dbReference type="GO" id="GO:0003677">
    <property type="term" value="F:DNA binding"/>
    <property type="evidence" value="ECO:0007669"/>
    <property type="project" value="UniProtKB-KW"/>
</dbReference>
<dbReference type="GO" id="GO:0004170">
    <property type="term" value="F:dUTP diphosphatase activity"/>
    <property type="evidence" value="ECO:0007669"/>
    <property type="project" value="UniProtKB-EC"/>
</dbReference>
<dbReference type="GO" id="GO:0039660">
    <property type="term" value="F:structural constituent of virion"/>
    <property type="evidence" value="ECO:0007669"/>
    <property type="project" value="UniProtKB-KW"/>
</dbReference>
<dbReference type="GO" id="GO:0008270">
    <property type="term" value="F:zinc ion binding"/>
    <property type="evidence" value="ECO:0007669"/>
    <property type="project" value="UniProtKB-KW"/>
</dbReference>
<dbReference type="GO" id="GO:0006508">
    <property type="term" value="P:proteolysis"/>
    <property type="evidence" value="ECO:0007669"/>
    <property type="project" value="UniProtKB-KW"/>
</dbReference>
<dbReference type="GO" id="GO:0075523">
    <property type="term" value="P:viral translational frameshifting"/>
    <property type="evidence" value="ECO:0007669"/>
    <property type="project" value="UniProtKB-KW"/>
</dbReference>
<dbReference type="CDD" id="cd05482">
    <property type="entry name" value="HIV_retropepsin_like"/>
    <property type="match status" value="1"/>
</dbReference>
<dbReference type="CDD" id="cd07557">
    <property type="entry name" value="trimeric_dUTPase"/>
    <property type="match status" value="1"/>
</dbReference>
<dbReference type="FunFam" id="1.10.1200.30:FF:000003">
    <property type="entry name" value="Gag polyprotein"/>
    <property type="match status" value="1"/>
</dbReference>
<dbReference type="FunFam" id="1.10.150.490:FF:000001">
    <property type="entry name" value="Gag polyprotein"/>
    <property type="match status" value="1"/>
</dbReference>
<dbReference type="FunFam" id="1.10.375.10:FF:000007">
    <property type="entry name" value="Gag polyprotein"/>
    <property type="match status" value="1"/>
</dbReference>
<dbReference type="FunFam" id="4.10.60.10:FF:000036">
    <property type="entry name" value="Gag polyprotein"/>
    <property type="match status" value="1"/>
</dbReference>
<dbReference type="FunFam" id="2.40.70.10:FF:000150">
    <property type="entry name" value="Gag-Pro polyprotein"/>
    <property type="match status" value="1"/>
</dbReference>
<dbReference type="Gene3D" id="1.10.1200.30">
    <property type="match status" value="1"/>
</dbReference>
<dbReference type="Gene3D" id="2.70.40.10">
    <property type="match status" value="1"/>
</dbReference>
<dbReference type="Gene3D" id="2.40.70.10">
    <property type="entry name" value="Acid Proteases"/>
    <property type="match status" value="1"/>
</dbReference>
<dbReference type="Gene3D" id="1.10.375.10">
    <property type="entry name" value="Human Immunodeficiency Virus Type 1 Capsid Protein"/>
    <property type="match status" value="1"/>
</dbReference>
<dbReference type="Gene3D" id="1.10.150.490">
    <property type="entry name" value="Retroviral GAG p10 protein"/>
    <property type="match status" value="1"/>
</dbReference>
<dbReference type="Gene3D" id="4.10.60.10">
    <property type="entry name" value="Zinc finger, CCHC-type"/>
    <property type="match status" value="1"/>
</dbReference>
<dbReference type="InterPro" id="IPR001969">
    <property type="entry name" value="Aspartic_peptidase_AS"/>
</dbReference>
<dbReference type="InterPro" id="IPR003322">
    <property type="entry name" value="B_retro_matrix"/>
</dbReference>
<dbReference type="InterPro" id="IPR038124">
    <property type="entry name" value="B_retro_matrix_sf"/>
</dbReference>
<dbReference type="InterPro" id="IPR029054">
    <property type="entry name" value="dUTPase-like"/>
</dbReference>
<dbReference type="InterPro" id="IPR036157">
    <property type="entry name" value="dUTPase-like_sf"/>
</dbReference>
<dbReference type="InterPro" id="IPR033704">
    <property type="entry name" value="dUTPase_trimeric"/>
</dbReference>
<dbReference type="InterPro" id="IPR045345">
    <property type="entry name" value="Gag_p24_C"/>
</dbReference>
<dbReference type="InterPro" id="IPR001995">
    <property type="entry name" value="Peptidase_A2_cat"/>
</dbReference>
<dbReference type="InterPro" id="IPR021109">
    <property type="entry name" value="Peptidase_aspartic_dom_sf"/>
</dbReference>
<dbReference type="InterPro" id="IPR050195">
    <property type="entry name" value="Primate_lentivir_Gag_pol-like"/>
</dbReference>
<dbReference type="InterPro" id="IPR034170">
    <property type="entry name" value="Retropepsin-like_cat_dom"/>
</dbReference>
<dbReference type="InterPro" id="IPR018061">
    <property type="entry name" value="Retropepsins"/>
</dbReference>
<dbReference type="InterPro" id="IPR008916">
    <property type="entry name" value="Retrov_capsid_C"/>
</dbReference>
<dbReference type="InterPro" id="IPR008919">
    <property type="entry name" value="Retrov_capsid_N"/>
</dbReference>
<dbReference type="InterPro" id="IPR010999">
    <property type="entry name" value="Retrovr_matrix"/>
</dbReference>
<dbReference type="InterPro" id="IPR001878">
    <property type="entry name" value="Znf_CCHC"/>
</dbReference>
<dbReference type="InterPro" id="IPR036875">
    <property type="entry name" value="Znf_CCHC_sf"/>
</dbReference>
<dbReference type="PANTHER" id="PTHR40389">
    <property type="entry name" value="ENDOGENOUS RETROVIRUS GROUP K MEMBER 24 GAG POLYPROTEIN-RELATED"/>
    <property type="match status" value="1"/>
</dbReference>
<dbReference type="PANTHER" id="PTHR40389:SF3">
    <property type="entry name" value="IGE-BINDING PROTEIN"/>
    <property type="match status" value="1"/>
</dbReference>
<dbReference type="Pfam" id="PF00692">
    <property type="entry name" value="dUTPase"/>
    <property type="match status" value="1"/>
</dbReference>
<dbReference type="Pfam" id="PF02337">
    <property type="entry name" value="Gag_p10"/>
    <property type="match status" value="1"/>
</dbReference>
<dbReference type="Pfam" id="PF00607">
    <property type="entry name" value="Gag_p24"/>
    <property type="match status" value="1"/>
</dbReference>
<dbReference type="Pfam" id="PF19317">
    <property type="entry name" value="Gag_p24_C"/>
    <property type="match status" value="1"/>
</dbReference>
<dbReference type="Pfam" id="PF00077">
    <property type="entry name" value="RVP"/>
    <property type="match status" value="1"/>
</dbReference>
<dbReference type="Pfam" id="PF00098">
    <property type="entry name" value="zf-CCHC"/>
    <property type="match status" value="1"/>
</dbReference>
<dbReference type="Pfam" id="PF14787">
    <property type="entry name" value="zf-CCHC_5"/>
    <property type="match status" value="1"/>
</dbReference>
<dbReference type="SMART" id="SM00343">
    <property type="entry name" value="ZnF_C2HC"/>
    <property type="match status" value="2"/>
</dbReference>
<dbReference type="SUPFAM" id="SSF50630">
    <property type="entry name" value="Acid proteases"/>
    <property type="match status" value="1"/>
</dbReference>
<dbReference type="SUPFAM" id="SSF51283">
    <property type="entry name" value="dUTPase-like"/>
    <property type="match status" value="1"/>
</dbReference>
<dbReference type="SUPFAM" id="SSF47836">
    <property type="entry name" value="Retroviral matrix proteins"/>
    <property type="match status" value="1"/>
</dbReference>
<dbReference type="SUPFAM" id="SSF47353">
    <property type="entry name" value="Retrovirus capsid dimerization domain-like"/>
    <property type="match status" value="1"/>
</dbReference>
<dbReference type="SUPFAM" id="SSF47943">
    <property type="entry name" value="Retrovirus capsid protein, N-terminal core domain"/>
    <property type="match status" value="1"/>
</dbReference>
<dbReference type="SUPFAM" id="SSF57756">
    <property type="entry name" value="Retrovirus zinc finger-like domains"/>
    <property type="match status" value="2"/>
</dbReference>
<dbReference type="PROSITE" id="PS50175">
    <property type="entry name" value="ASP_PROT_RETROV"/>
    <property type="match status" value="1"/>
</dbReference>
<dbReference type="PROSITE" id="PS00141">
    <property type="entry name" value="ASP_PROTEASE"/>
    <property type="match status" value="1"/>
</dbReference>
<dbReference type="PROSITE" id="PS50158">
    <property type="entry name" value="ZF_CCHC"/>
    <property type="match status" value="1"/>
</dbReference>
<reference key="1">
    <citation type="journal article" date="2000" name="J. Virol.">
        <title>Genetics of mouse mammary tumor virus-induced mammary tumors: linkage of tumor induction to the gag gene.</title>
        <authorList>
            <person name="Hook L.M."/>
            <person name="Agafonova Y."/>
            <person name="Ross S.R."/>
            <person name="Turner S.J."/>
            <person name="Golovkina T.V."/>
        </authorList>
    </citation>
    <scope>NUCLEOTIDE SEQUENCE [GENOMIC DNA]</scope>
</reference>
<reference key="2">
    <citation type="journal article" date="1987" name="Proc. Natl. Acad. Sci. U.S.A.">
        <title>Two efficient ribosomal frameshifting events are required for synthesis of mouse mammary tumor virus gag-related polyproteins.</title>
        <authorList>
            <person name="Jacks T."/>
            <person name="Townsley K."/>
            <person name="Varmus H.E."/>
            <person name="Majors J."/>
        </authorList>
    </citation>
    <scope>NUCLEOTIDE SEQUENCE [GENOMIC RNA] OF 359-591</scope>
    <scope>RIBOSOMAL FRAMESHIFT</scope>
</reference>
<reference key="3">
    <citation type="journal article" date="1989" name="J. Virol.">
        <title>Analysis of gag proteins from mouse mammary tumor virus.</title>
        <authorList>
            <person name="Hizi A."/>
            <person name="Henderson L.E."/>
            <person name="Copeland T.D."/>
            <person name="Sowder R.C."/>
            <person name="Krutzsch H.C."/>
            <person name="Oroszlan S."/>
        </authorList>
    </citation>
    <scope>PROTEIN SEQUENCE OF 2-58; 65-116; 194-218; 227-241; 251-252; 270-276 AND 362-591</scope>
    <scope>PROTEOLYTIC CLEAVAGE (GAG-PRO POLYPROTEIN)</scope>
    <scope>MYRISTOYLATION AT GLY-2</scope>
</reference>
<reference key="4">
    <citation type="journal article" date="1994" name="Virology">
        <title>The protein p30, encoded at the gag-pro junction of mouse mammary tumor virus, is a dUTPase fused with a nucleocapsid protein.</title>
        <authorList>
            <person name="Bergman A.C."/>
            <person name="Bjornberg O."/>
            <person name="Nord J."/>
            <person name="Nyman P.O."/>
            <person name="Rosengren A.M."/>
        </authorList>
    </citation>
    <scope>PROTEIN SEQUENCE OF 497-512 AND 744-745</scope>
    <scope>RIBOSOMAL FRAMESHIFT</scope>
    <scope>SUBUNIT (NUCLEOCAPSID PROTEIN-DUTPASE)</scope>
    <scope>FUNCTION (NUCLEOCAPSID PROTEIN-DUTPASE)</scope>
    <scope>COFACTOR (NUCLEOCAPSID PROTEIN-DUTPASE)</scope>
</reference>
<keyword id="KW-0064">Aspartyl protease</keyword>
<keyword id="KW-0167">Capsid protein</keyword>
<keyword id="KW-0903">Direct protein sequencing</keyword>
<keyword id="KW-0238">DNA-binding</keyword>
<keyword id="KW-0378">Hydrolase</keyword>
<keyword id="KW-0449">Lipoprotein</keyword>
<keyword id="KW-0460">Magnesium</keyword>
<keyword id="KW-0479">Metal-binding</keyword>
<keyword id="KW-0519">Myristate</keyword>
<keyword id="KW-0597">Phosphoprotein</keyword>
<keyword id="KW-0645">Protease</keyword>
<keyword id="KW-1185">Reference proteome</keyword>
<keyword id="KW-0677">Repeat</keyword>
<keyword id="KW-0688">Ribosomal frameshifting</keyword>
<keyword id="KW-0468">Viral matrix protein</keyword>
<keyword id="KW-0543">Viral nucleoprotein</keyword>
<keyword id="KW-0946">Virion</keyword>
<keyword id="KW-0862">Zinc</keyword>
<keyword id="KW-0863">Zinc-finger</keyword>